<sequence>MRVVLQRSKEASVTVDGEIVGQIPFGLTLLVGITHEDTEKDATYIAEKIANLRIFEDESGKMNHSVLDVEGQVLSISQFTLYGDCRKGRRPNFMDAAKPDYAEHLYDFFNEEVRKQGLHVETGKFGAMMDVSLINDGPVTLIVESK</sequence>
<organism>
    <name type="scientific">Bacillus anthracis</name>
    <dbReference type="NCBI Taxonomy" id="1392"/>
    <lineage>
        <taxon>Bacteria</taxon>
        <taxon>Bacillati</taxon>
        <taxon>Bacillota</taxon>
        <taxon>Bacilli</taxon>
        <taxon>Bacillales</taxon>
        <taxon>Bacillaceae</taxon>
        <taxon>Bacillus</taxon>
        <taxon>Bacillus cereus group</taxon>
    </lineage>
</organism>
<keyword id="KW-0963">Cytoplasm</keyword>
<keyword id="KW-0378">Hydrolase</keyword>
<keyword id="KW-1185">Reference proteome</keyword>
<keyword id="KW-0694">RNA-binding</keyword>
<keyword id="KW-0820">tRNA-binding</keyword>
<proteinExistence type="inferred from homology"/>
<dbReference type="EC" id="3.1.1.96" evidence="1"/>
<dbReference type="EMBL" id="AE016879">
    <property type="protein sequence ID" value="AAP28339.1"/>
    <property type="molecule type" value="Genomic_DNA"/>
</dbReference>
<dbReference type="EMBL" id="AE017334">
    <property type="protein sequence ID" value="AAT33758.1"/>
    <property type="molecule type" value="Genomic_DNA"/>
</dbReference>
<dbReference type="EMBL" id="AE017225">
    <property type="protein sequence ID" value="AAT56599.1"/>
    <property type="molecule type" value="Genomic_DNA"/>
</dbReference>
<dbReference type="RefSeq" id="NP_846853.1">
    <property type="nucleotide sequence ID" value="NC_003997.3"/>
</dbReference>
<dbReference type="RefSeq" id="WP_001266954.1">
    <property type="nucleotide sequence ID" value="NZ_WXXJ01000027.1"/>
</dbReference>
<dbReference type="RefSeq" id="YP_030548.1">
    <property type="nucleotide sequence ID" value="NC_005945.1"/>
</dbReference>
<dbReference type="SMR" id="Q81LI3"/>
<dbReference type="STRING" id="261594.GBAA_4636"/>
<dbReference type="DNASU" id="1085477"/>
<dbReference type="KEGG" id="ban:BA_4636"/>
<dbReference type="KEGG" id="banh:HYU01_22600"/>
<dbReference type="KEGG" id="bar:GBAA_4636"/>
<dbReference type="KEGG" id="bat:BAS4301"/>
<dbReference type="PATRIC" id="fig|198094.11.peg.4601"/>
<dbReference type="eggNOG" id="COG1490">
    <property type="taxonomic scope" value="Bacteria"/>
</dbReference>
<dbReference type="HOGENOM" id="CLU_076901_1_0_9"/>
<dbReference type="OMA" id="VFGADMK"/>
<dbReference type="OrthoDB" id="9801395at2"/>
<dbReference type="Proteomes" id="UP000000427">
    <property type="component" value="Chromosome"/>
</dbReference>
<dbReference type="Proteomes" id="UP000000594">
    <property type="component" value="Chromosome"/>
</dbReference>
<dbReference type="GO" id="GO:0005737">
    <property type="term" value="C:cytoplasm"/>
    <property type="evidence" value="ECO:0007669"/>
    <property type="project" value="UniProtKB-SubCell"/>
</dbReference>
<dbReference type="GO" id="GO:0051500">
    <property type="term" value="F:D-tyrosyl-tRNA(Tyr) deacylase activity"/>
    <property type="evidence" value="ECO:0007669"/>
    <property type="project" value="TreeGrafter"/>
</dbReference>
<dbReference type="GO" id="GO:0106026">
    <property type="term" value="F:Gly-tRNA(Ala) deacylase activity"/>
    <property type="evidence" value="ECO:0007669"/>
    <property type="project" value="UniProtKB-UniRule"/>
</dbReference>
<dbReference type="GO" id="GO:0043908">
    <property type="term" value="F:Ser(Gly)-tRNA(Ala) hydrolase activity"/>
    <property type="evidence" value="ECO:0007669"/>
    <property type="project" value="UniProtKB-UniRule"/>
</dbReference>
<dbReference type="GO" id="GO:0000049">
    <property type="term" value="F:tRNA binding"/>
    <property type="evidence" value="ECO:0007669"/>
    <property type="project" value="UniProtKB-UniRule"/>
</dbReference>
<dbReference type="GO" id="GO:0019478">
    <property type="term" value="P:D-amino acid catabolic process"/>
    <property type="evidence" value="ECO:0007669"/>
    <property type="project" value="UniProtKB-UniRule"/>
</dbReference>
<dbReference type="CDD" id="cd00563">
    <property type="entry name" value="Dtyr_deacylase"/>
    <property type="match status" value="1"/>
</dbReference>
<dbReference type="FunFam" id="3.50.80.10:FF:000001">
    <property type="entry name" value="D-aminoacyl-tRNA deacylase"/>
    <property type="match status" value="1"/>
</dbReference>
<dbReference type="Gene3D" id="3.50.80.10">
    <property type="entry name" value="D-tyrosyl-tRNA(Tyr) deacylase"/>
    <property type="match status" value="1"/>
</dbReference>
<dbReference type="HAMAP" id="MF_00518">
    <property type="entry name" value="Deacylase_Dtd"/>
    <property type="match status" value="1"/>
</dbReference>
<dbReference type="InterPro" id="IPR003732">
    <property type="entry name" value="Daa-tRNA_deacyls_DTD"/>
</dbReference>
<dbReference type="InterPro" id="IPR023509">
    <property type="entry name" value="DTD-like_sf"/>
</dbReference>
<dbReference type="NCBIfam" id="TIGR00256">
    <property type="entry name" value="D-aminoacyl-tRNA deacylase"/>
    <property type="match status" value="1"/>
</dbReference>
<dbReference type="PANTHER" id="PTHR10472:SF5">
    <property type="entry name" value="D-AMINOACYL-TRNA DEACYLASE 1"/>
    <property type="match status" value="1"/>
</dbReference>
<dbReference type="PANTHER" id="PTHR10472">
    <property type="entry name" value="D-TYROSYL-TRNA TYR DEACYLASE"/>
    <property type="match status" value="1"/>
</dbReference>
<dbReference type="Pfam" id="PF02580">
    <property type="entry name" value="Tyr_Deacylase"/>
    <property type="match status" value="1"/>
</dbReference>
<dbReference type="SUPFAM" id="SSF69500">
    <property type="entry name" value="DTD-like"/>
    <property type="match status" value="1"/>
</dbReference>
<reference key="1">
    <citation type="journal article" date="2003" name="Nature">
        <title>The genome sequence of Bacillus anthracis Ames and comparison to closely related bacteria.</title>
        <authorList>
            <person name="Read T.D."/>
            <person name="Peterson S.N."/>
            <person name="Tourasse N.J."/>
            <person name="Baillie L.W."/>
            <person name="Paulsen I.T."/>
            <person name="Nelson K.E."/>
            <person name="Tettelin H."/>
            <person name="Fouts D.E."/>
            <person name="Eisen J.A."/>
            <person name="Gill S.R."/>
            <person name="Holtzapple E.K."/>
            <person name="Okstad O.A."/>
            <person name="Helgason E."/>
            <person name="Rilstone J."/>
            <person name="Wu M."/>
            <person name="Kolonay J.F."/>
            <person name="Beanan M.J."/>
            <person name="Dodson R.J."/>
            <person name="Brinkac L.M."/>
            <person name="Gwinn M.L."/>
            <person name="DeBoy R.T."/>
            <person name="Madpu R."/>
            <person name="Daugherty S.C."/>
            <person name="Durkin A.S."/>
            <person name="Haft D.H."/>
            <person name="Nelson W.C."/>
            <person name="Peterson J.D."/>
            <person name="Pop M."/>
            <person name="Khouri H.M."/>
            <person name="Radune D."/>
            <person name="Benton J.L."/>
            <person name="Mahamoud Y."/>
            <person name="Jiang L."/>
            <person name="Hance I.R."/>
            <person name="Weidman J.F."/>
            <person name="Berry K.J."/>
            <person name="Plaut R.D."/>
            <person name="Wolf A.M."/>
            <person name="Watkins K.L."/>
            <person name="Nierman W.C."/>
            <person name="Hazen A."/>
            <person name="Cline R.T."/>
            <person name="Redmond C."/>
            <person name="Thwaite J.E."/>
            <person name="White O."/>
            <person name="Salzberg S.L."/>
            <person name="Thomason B."/>
            <person name="Friedlander A.M."/>
            <person name="Koehler T.M."/>
            <person name="Hanna P.C."/>
            <person name="Kolstoe A.-B."/>
            <person name="Fraser C.M."/>
        </authorList>
    </citation>
    <scope>NUCLEOTIDE SEQUENCE [LARGE SCALE GENOMIC DNA]</scope>
    <source>
        <strain>Ames / isolate Porton</strain>
    </source>
</reference>
<reference key="2">
    <citation type="journal article" date="2009" name="J. Bacteriol.">
        <title>The complete genome sequence of Bacillus anthracis Ames 'Ancestor'.</title>
        <authorList>
            <person name="Ravel J."/>
            <person name="Jiang L."/>
            <person name="Stanley S.T."/>
            <person name="Wilson M.R."/>
            <person name="Decker R.S."/>
            <person name="Read T.D."/>
            <person name="Worsham P."/>
            <person name="Keim P.S."/>
            <person name="Salzberg S.L."/>
            <person name="Fraser-Liggett C.M."/>
            <person name="Rasko D.A."/>
        </authorList>
    </citation>
    <scope>NUCLEOTIDE SEQUENCE [LARGE SCALE GENOMIC DNA]</scope>
    <source>
        <strain>Ames ancestor</strain>
    </source>
</reference>
<reference key="3">
    <citation type="submission" date="2004-01" db="EMBL/GenBank/DDBJ databases">
        <title>Complete genome sequence of Bacillus anthracis Sterne.</title>
        <authorList>
            <person name="Brettin T.S."/>
            <person name="Bruce D."/>
            <person name="Challacombe J.F."/>
            <person name="Gilna P."/>
            <person name="Han C."/>
            <person name="Hill K."/>
            <person name="Hitchcock P."/>
            <person name="Jackson P."/>
            <person name="Keim P."/>
            <person name="Longmire J."/>
            <person name="Lucas S."/>
            <person name="Okinaka R."/>
            <person name="Richardson P."/>
            <person name="Rubin E."/>
            <person name="Tice H."/>
        </authorList>
    </citation>
    <scope>NUCLEOTIDE SEQUENCE [LARGE SCALE GENOMIC DNA]</scope>
    <source>
        <strain>Sterne</strain>
    </source>
</reference>
<comment type="function">
    <text evidence="1">An aminoacyl-tRNA editing enzyme that deacylates mischarged D-aminoacyl-tRNAs. Also deacylates mischarged glycyl-tRNA(Ala), protecting cells against glycine mischarging by AlaRS. Acts via tRNA-based rather than protein-based catalysis; rejects L-amino acids rather than detecting D-amino acids in the active site. By recycling D-aminoacyl-tRNA to D-amino acids and free tRNA molecules, this enzyme counteracts the toxicity associated with the formation of D-aminoacyl-tRNA entities in vivo and helps enforce protein L-homochirality.</text>
</comment>
<comment type="catalytic activity">
    <reaction evidence="1">
        <text>glycyl-tRNA(Ala) + H2O = tRNA(Ala) + glycine + H(+)</text>
        <dbReference type="Rhea" id="RHEA:53744"/>
        <dbReference type="Rhea" id="RHEA-COMP:9657"/>
        <dbReference type="Rhea" id="RHEA-COMP:13640"/>
        <dbReference type="ChEBI" id="CHEBI:15377"/>
        <dbReference type="ChEBI" id="CHEBI:15378"/>
        <dbReference type="ChEBI" id="CHEBI:57305"/>
        <dbReference type="ChEBI" id="CHEBI:78442"/>
        <dbReference type="ChEBI" id="CHEBI:78522"/>
        <dbReference type="EC" id="3.1.1.96"/>
    </reaction>
</comment>
<comment type="catalytic activity">
    <reaction evidence="1">
        <text>a D-aminoacyl-tRNA + H2O = a tRNA + a D-alpha-amino acid + H(+)</text>
        <dbReference type="Rhea" id="RHEA:13953"/>
        <dbReference type="Rhea" id="RHEA-COMP:10123"/>
        <dbReference type="Rhea" id="RHEA-COMP:10124"/>
        <dbReference type="ChEBI" id="CHEBI:15377"/>
        <dbReference type="ChEBI" id="CHEBI:15378"/>
        <dbReference type="ChEBI" id="CHEBI:59871"/>
        <dbReference type="ChEBI" id="CHEBI:78442"/>
        <dbReference type="ChEBI" id="CHEBI:79333"/>
        <dbReference type="EC" id="3.1.1.96"/>
    </reaction>
</comment>
<comment type="subunit">
    <text evidence="1">Homodimer.</text>
</comment>
<comment type="subcellular location">
    <subcellularLocation>
        <location evidence="1">Cytoplasm</location>
    </subcellularLocation>
</comment>
<comment type="domain">
    <text evidence="1">A Gly-cisPro motif from one monomer fits into the active site of the other monomer to allow specific chiral rejection of L-amino acids.</text>
</comment>
<comment type="similarity">
    <text evidence="1">Belongs to the DTD family.</text>
</comment>
<gene>
    <name evidence="1" type="primary">dtd</name>
    <name type="ordered locus">BA_4636</name>
    <name type="ordered locus">GBAA_4636</name>
    <name type="ordered locus">BAS4301</name>
</gene>
<protein>
    <recommendedName>
        <fullName evidence="1">D-aminoacyl-tRNA deacylase</fullName>
        <shortName evidence="1">DTD</shortName>
        <ecNumber evidence="1">3.1.1.96</ecNumber>
    </recommendedName>
    <alternativeName>
        <fullName evidence="1">Gly-tRNA(Ala) deacylase</fullName>
    </alternativeName>
</protein>
<name>DTD_BACAN</name>
<feature type="chain" id="PRO_0000164515" description="D-aminoacyl-tRNA deacylase">
    <location>
        <begin position="1"/>
        <end position="146"/>
    </location>
</feature>
<feature type="short sequence motif" description="Gly-cisPro motif, important for rejection of L-amino acids" evidence="1">
    <location>
        <begin position="137"/>
        <end position="138"/>
    </location>
</feature>
<accession>Q81LI3</accession>
<accession>Q6HSZ0</accession>
<accession>Q6KM78</accession>
<evidence type="ECO:0000255" key="1">
    <source>
        <dbReference type="HAMAP-Rule" id="MF_00518"/>
    </source>
</evidence>